<accession>A9UM79</accession>
<name>DRS7C_XENTR</name>
<sequence>MGFLTFLIVPLLILGISGIVYIYREVVRLMSRSALKNKVVVITDAISGLGKECSRVFHSAGARLVLCGKTWEKLEALHDALISVADPSVTFTPKLVLLDISDINNMEAMGKEIQDCYGCVDVLINNASMKMKGPLQSVSLELDKKIMDANYFGPITLVKAILPHMISRRTGQIVLVNTIQGKIGVPFRAAYAASKHAIQGFFDCLRAEVEEFDVSVSTVSPTFIRSYHVQPQPGNWEASIWKFFFRKLSYGAHPVEVAEEVLSTVSRKKQEVFMANPIPRAAVYIRTFLPELFFAVVATGVKEKHFVEEEK</sequence>
<protein>
    <recommendedName>
        <fullName>Dehydrogenase/reductase SDR family member 7C</fullName>
        <ecNumber>1.1.-.-</ecNumber>
    </recommendedName>
    <alternativeName>
        <fullName evidence="2">Short-chain dehydrogenase/reductase family 32C member 2</fullName>
    </alternativeName>
</protein>
<proteinExistence type="evidence at transcript level"/>
<dbReference type="EC" id="1.1.-.-"/>
<dbReference type="EMBL" id="BC157553">
    <property type="protein sequence ID" value="AAI57554.1"/>
    <property type="molecule type" value="mRNA"/>
</dbReference>
<dbReference type="RefSeq" id="NP_001107423.1">
    <property type="nucleotide sequence ID" value="NM_001113951.1"/>
</dbReference>
<dbReference type="SMR" id="A9UM79"/>
<dbReference type="FunCoup" id="A9UM79">
    <property type="interactions" value="25"/>
</dbReference>
<dbReference type="STRING" id="8364.ENSXETP00000021638"/>
<dbReference type="PaxDb" id="8364-ENSXETP00000026781"/>
<dbReference type="GeneID" id="100135266"/>
<dbReference type="KEGG" id="xtr:100135266"/>
<dbReference type="AGR" id="Xenbase:XB-GENE-5956201"/>
<dbReference type="CTD" id="201140"/>
<dbReference type="Xenbase" id="XB-GENE-5956201">
    <property type="gene designation" value="dhrs7c"/>
</dbReference>
<dbReference type="eggNOG" id="KOG1205">
    <property type="taxonomic scope" value="Eukaryota"/>
</dbReference>
<dbReference type="HOGENOM" id="CLU_010194_2_1_1"/>
<dbReference type="InParanoid" id="A9UM79"/>
<dbReference type="OMA" id="NIMDVNY"/>
<dbReference type="OrthoDB" id="5307821at2759"/>
<dbReference type="TreeFam" id="TF313474"/>
<dbReference type="Proteomes" id="UP000008143">
    <property type="component" value="Chromosome 10"/>
</dbReference>
<dbReference type="Bgee" id="ENSXETG00000012255">
    <property type="expression patterns" value="Expressed in skeletal muscle tissue and 7 other cell types or tissues"/>
</dbReference>
<dbReference type="GO" id="GO:0005576">
    <property type="term" value="C:extracellular region"/>
    <property type="evidence" value="ECO:0007669"/>
    <property type="project" value="UniProtKB-SubCell"/>
</dbReference>
<dbReference type="GO" id="GO:0016491">
    <property type="term" value="F:oxidoreductase activity"/>
    <property type="evidence" value="ECO:0007669"/>
    <property type="project" value="UniProtKB-KW"/>
</dbReference>
<dbReference type="CDD" id="cd05332">
    <property type="entry name" value="11beta-HSD1_like_SDR_c"/>
    <property type="match status" value="1"/>
</dbReference>
<dbReference type="FunFam" id="3.40.50.720:FF:000122">
    <property type="entry name" value="Dehydrogenase/reductase SDR family member 7B"/>
    <property type="match status" value="1"/>
</dbReference>
<dbReference type="Gene3D" id="3.40.50.720">
    <property type="entry name" value="NAD(P)-binding Rossmann-like Domain"/>
    <property type="match status" value="1"/>
</dbReference>
<dbReference type="InterPro" id="IPR036291">
    <property type="entry name" value="NAD(P)-bd_dom_sf"/>
</dbReference>
<dbReference type="InterPro" id="IPR002347">
    <property type="entry name" value="SDR_fam"/>
</dbReference>
<dbReference type="InterPro" id="IPR052148">
    <property type="entry name" value="SDR_family_member_7C"/>
</dbReference>
<dbReference type="PANTHER" id="PTHR44668">
    <property type="match status" value="1"/>
</dbReference>
<dbReference type="PANTHER" id="PTHR44668:SF2">
    <property type="entry name" value="DEHYDROGENASE_REDUCTASE SDR FAMILY MEMBER 7C"/>
    <property type="match status" value="1"/>
</dbReference>
<dbReference type="Pfam" id="PF00106">
    <property type="entry name" value="adh_short"/>
    <property type="match status" value="1"/>
</dbReference>
<dbReference type="PRINTS" id="PR00081">
    <property type="entry name" value="GDHRDH"/>
</dbReference>
<dbReference type="PRINTS" id="PR00080">
    <property type="entry name" value="SDRFAMILY"/>
</dbReference>
<dbReference type="SUPFAM" id="SSF51735">
    <property type="entry name" value="NAD(P)-binding Rossmann-fold domains"/>
    <property type="match status" value="1"/>
</dbReference>
<gene>
    <name type="primary">dhrs7c</name>
    <name evidence="2" type="synonym">sdr32c2</name>
</gene>
<comment type="function">
    <text evidence="4">Putative oxidoreductase.</text>
</comment>
<comment type="subcellular location">
    <subcellularLocation>
        <location evidence="4">Secreted</location>
    </subcellularLocation>
</comment>
<comment type="similarity">
    <text evidence="4">Belongs to the short-chain dehydrogenases/reductases (SDR) family.</text>
</comment>
<feature type="signal peptide" evidence="3">
    <location>
        <begin position="1"/>
        <end position="18"/>
    </location>
</feature>
<feature type="chain" id="PRO_0000333759" description="Dehydrogenase/reductase SDR family member 7C">
    <location>
        <begin position="19"/>
        <end position="311"/>
    </location>
</feature>
<feature type="active site" description="Proton acceptor" evidence="1">
    <location>
        <position position="191"/>
    </location>
</feature>
<feature type="binding site" evidence="1">
    <location>
        <begin position="41"/>
        <end position="65"/>
    </location>
    <ligand>
        <name>NAD(+)</name>
        <dbReference type="ChEBI" id="CHEBI:57540"/>
    </ligand>
</feature>
<feature type="binding site" evidence="1">
    <location>
        <position position="178"/>
    </location>
    <ligand>
        <name>substrate</name>
    </ligand>
</feature>
<reference key="1">
    <citation type="submission" date="2007-12" db="EMBL/GenBank/DDBJ databases">
        <authorList>
            <consortium name="NIH - Xenopus Gene Collection (XGC) project"/>
        </authorList>
    </citation>
    <scope>NUCLEOTIDE SEQUENCE [LARGE SCALE MRNA]</scope>
    <source>
        <strain>N6</strain>
        <tissue>Oviduct</tissue>
    </source>
</reference>
<keyword id="KW-0520">NAD</keyword>
<keyword id="KW-0521">NADP</keyword>
<keyword id="KW-0560">Oxidoreductase</keyword>
<keyword id="KW-1185">Reference proteome</keyword>
<keyword id="KW-0964">Secreted</keyword>
<keyword id="KW-0732">Signal</keyword>
<evidence type="ECO:0000250" key="1"/>
<evidence type="ECO:0000250" key="2">
    <source>
        <dbReference type="UniProtKB" id="A6NNS2"/>
    </source>
</evidence>
<evidence type="ECO:0000255" key="3"/>
<evidence type="ECO:0000305" key="4"/>
<organism>
    <name type="scientific">Xenopus tropicalis</name>
    <name type="common">Western clawed frog</name>
    <name type="synonym">Silurana tropicalis</name>
    <dbReference type="NCBI Taxonomy" id="8364"/>
    <lineage>
        <taxon>Eukaryota</taxon>
        <taxon>Metazoa</taxon>
        <taxon>Chordata</taxon>
        <taxon>Craniata</taxon>
        <taxon>Vertebrata</taxon>
        <taxon>Euteleostomi</taxon>
        <taxon>Amphibia</taxon>
        <taxon>Batrachia</taxon>
        <taxon>Anura</taxon>
        <taxon>Pipoidea</taxon>
        <taxon>Pipidae</taxon>
        <taxon>Xenopodinae</taxon>
        <taxon>Xenopus</taxon>
        <taxon>Silurana</taxon>
    </lineage>
</organism>